<organism>
    <name type="scientific">Arabidopsis thaliana</name>
    <name type="common">Mouse-ear cress</name>
    <dbReference type="NCBI Taxonomy" id="3702"/>
    <lineage>
        <taxon>Eukaryota</taxon>
        <taxon>Viridiplantae</taxon>
        <taxon>Streptophyta</taxon>
        <taxon>Embryophyta</taxon>
        <taxon>Tracheophyta</taxon>
        <taxon>Spermatophyta</taxon>
        <taxon>Magnoliopsida</taxon>
        <taxon>eudicotyledons</taxon>
        <taxon>Gunneridae</taxon>
        <taxon>Pentapetalae</taxon>
        <taxon>rosids</taxon>
        <taxon>malvids</taxon>
        <taxon>Brassicales</taxon>
        <taxon>Brassicaceae</taxon>
        <taxon>Camelineae</taxon>
        <taxon>Arabidopsis</taxon>
    </lineage>
</organism>
<keyword id="KW-0012">Acyltransferase</keyword>
<keyword id="KW-0025">Alternative splicing</keyword>
<keyword id="KW-0963">Cytoplasm</keyword>
<keyword id="KW-0444">Lipid biosynthesis</keyword>
<keyword id="KW-0443">Lipid metabolism</keyword>
<keyword id="KW-0594">Phospholipid biosynthesis</keyword>
<keyword id="KW-1208">Phospholipid metabolism</keyword>
<keyword id="KW-1185">Reference proteome</keyword>
<keyword id="KW-0808">Transferase</keyword>
<protein>
    <recommendedName>
        <fullName>1-acylglycerol-3-phosphate O-acyltransferase</fullName>
        <ecNumber>2.3.1.51</ecNumber>
    </recommendedName>
    <alternativeName>
        <fullName>Lipid droplet-binding protein CGI-58 homolog</fullName>
    </alternativeName>
</protein>
<name>LPAAT_ARATH</name>
<dbReference type="EC" id="2.3.1.51"/>
<dbReference type="EMBL" id="AC002343">
    <property type="protein sequence ID" value="AAB63608.1"/>
    <property type="molecule type" value="Genomic_DNA"/>
</dbReference>
<dbReference type="EMBL" id="AL109619">
    <property type="protein sequence ID" value="CAB51659.1"/>
    <property type="status" value="ALT_INIT"/>
    <property type="molecule type" value="Genomic_DNA"/>
</dbReference>
<dbReference type="EMBL" id="AL161561">
    <property type="protein sequence ID" value="CAB79326.1"/>
    <property type="status" value="ALT_INIT"/>
    <property type="molecule type" value="Genomic_DNA"/>
</dbReference>
<dbReference type="EMBL" id="CP002687">
    <property type="protein sequence ID" value="AEE84857.1"/>
    <property type="molecule type" value="Genomic_DNA"/>
</dbReference>
<dbReference type="EMBL" id="AK117965">
    <property type="protein sequence ID" value="BAC42602.1"/>
    <property type="molecule type" value="mRNA"/>
</dbReference>
<dbReference type="EMBL" id="BT029749">
    <property type="protein sequence ID" value="ABM06019.1"/>
    <property type="molecule type" value="mRNA"/>
</dbReference>
<dbReference type="PIR" id="T13464">
    <property type="entry name" value="T13464"/>
</dbReference>
<dbReference type="RefSeq" id="NP_194147.2">
    <molecule id="O22975-1"/>
    <property type="nucleotide sequence ID" value="NM_118548.3"/>
</dbReference>
<dbReference type="SMR" id="O22975"/>
<dbReference type="FunCoup" id="O22975">
    <property type="interactions" value="3023"/>
</dbReference>
<dbReference type="STRING" id="3702.O22975"/>
<dbReference type="ESTHER" id="arath-LPAAT">
    <property type="family name" value="CGI-58_ABHD5_ABHD4"/>
</dbReference>
<dbReference type="MEROPS" id="S33.009"/>
<dbReference type="iPTMnet" id="O22975"/>
<dbReference type="PaxDb" id="3702-AT4G24160.1"/>
<dbReference type="ProteomicsDB" id="238720">
    <molecule id="O22975-1"/>
</dbReference>
<dbReference type="EnsemblPlants" id="AT4G24160.1">
    <molecule id="O22975-1"/>
    <property type="protein sequence ID" value="AT4G24160.1"/>
    <property type="gene ID" value="AT4G24160"/>
</dbReference>
<dbReference type="GeneID" id="828516"/>
<dbReference type="Gramene" id="AT4G24160.1">
    <molecule id="O22975-1"/>
    <property type="protein sequence ID" value="AT4G24160.1"/>
    <property type="gene ID" value="AT4G24160"/>
</dbReference>
<dbReference type="KEGG" id="ath:AT4G24160"/>
<dbReference type="Araport" id="AT4G24160"/>
<dbReference type="TAIR" id="AT4G24160"/>
<dbReference type="eggNOG" id="KOG4409">
    <property type="taxonomic scope" value="Eukaryota"/>
</dbReference>
<dbReference type="InParanoid" id="O22975"/>
<dbReference type="OMA" id="AFHSMMQ"/>
<dbReference type="PhylomeDB" id="O22975"/>
<dbReference type="BioCyc" id="ARA:AT4G24160-MONOMER"/>
<dbReference type="BRENDA" id="2.3.1.51">
    <property type="organism ID" value="399"/>
</dbReference>
<dbReference type="PRO" id="PR:O22975"/>
<dbReference type="Proteomes" id="UP000006548">
    <property type="component" value="Chromosome 4"/>
</dbReference>
<dbReference type="ExpressionAtlas" id="O22975">
    <property type="expression patterns" value="baseline and differential"/>
</dbReference>
<dbReference type="GO" id="GO:0005737">
    <property type="term" value="C:cytoplasm"/>
    <property type="evidence" value="ECO:0007669"/>
    <property type="project" value="UniProtKB-SubCell"/>
</dbReference>
<dbReference type="GO" id="GO:0003841">
    <property type="term" value="F:1-acylglycerol-3-phosphate O-acyltransferase activity"/>
    <property type="evidence" value="ECO:0007669"/>
    <property type="project" value="UniProtKB-EC"/>
</dbReference>
<dbReference type="GO" id="GO:0016298">
    <property type="term" value="F:lipase activity"/>
    <property type="evidence" value="ECO:0000314"/>
    <property type="project" value="TAIR"/>
</dbReference>
<dbReference type="GO" id="GO:0042171">
    <property type="term" value="F:lysophosphatidic acid acyltransferase activity"/>
    <property type="evidence" value="ECO:0000314"/>
    <property type="project" value="TAIR"/>
</dbReference>
<dbReference type="GO" id="GO:0004623">
    <property type="term" value="F:phospholipase A2 activity"/>
    <property type="evidence" value="ECO:0000314"/>
    <property type="project" value="TAIR"/>
</dbReference>
<dbReference type="GO" id="GO:0071456">
    <property type="term" value="P:cellular response to hypoxia"/>
    <property type="evidence" value="ECO:0007007"/>
    <property type="project" value="TAIR"/>
</dbReference>
<dbReference type="GO" id="GO:0055089">
    <property type="term" value="P:fatty acid homeostasis"/>
    <property type="evidence" value="ECO:0000315"/>
    <property type="project" value="TAIR"/>
</dbReference>
<dbReference type="GO" id="GO:0055088">
    <property type="term" value="P:lipid homeostasis"/>
    <property type="evidence" value="ECO:0000315"/>
    <property type="project" value="TAIR"/>
</dbReference>
<dbReference type="GO" id="GO:0008654">
    <property type="term" value="P:phospholipid biosynthetic process"/>
    <property type="evidence" value="ECO:0007669"/>
    <property type="project" value="UniProtKB-KW"/>
</dbReference>
<dbReference type="GO" id="GO:0055091">
    <property type="term" value="P:phospholipid homeostasis"/>
    <property type="evidence" value="ECO:0000315"/>
    <property type="project" value="TAIR"/>
</dbReference>
<dbReference type="GO" id="GO:0070328">
    <property type="term" value="P:triglyceride homeostasis"/>
    <property type="evidence" value="ECO:0000315"/>
    <property type="project" value="TAIR"/>
</dbReference>
<dbReference type="FunFam" id="3.40.50.1820:FF:000124">
    <property type="entry name" value="Probable 1-acylglycerol-3-phosphate O-acyltransferase"/>
    <property type="match status" value="1"/>
</dbReference>
<dbReference type="Gene3D" id="3.40.50.1820">
    <property type="entry name" value="alpha/beta hydrolase"/>
    <property type="match status" value="1"/>
</dbReference>
<dbReference type="InterPro" id="IPR000073">
    <property type="entry name" value="AB_hydrolase_1"/>
</dbReference>
<dbReference type="InterPro" id="IPR029058">
    <property type="entry name" value="AB_hydrolase_fold"/>
</dbReference>
<dbReference type="PANTHER" id="PTHR42886:SF29">
    <property type="entry name" value="PUMMELIG, ISOFORM A"/>
    <property type="match status" value="1"/>
</dbReference>
<dbReference type="PANTHER" id="PTHR42886">
    <property type="entry name" value="RE40534P-RELATED"/>
    <property type="match status" value="1"/>
</dbReference>
<dbReference type="Pfam" id="PF00561">
    <property type="entry name" value="Abhydrolase_1"/>
    <property type="match status" value="1"/>
</dbReference>
<dbReference type="PRINTS" id="PR00111">
    <property type="entry name" value="ABHYDROLASE"/>
</dbReference>
<dbReference type="SUPFAM" id="SSF53474">
    <property type="entry name" value="alpha/beta-Hydrolases"/>
    <property type="match status" value="1"/>
</dbReference>
<gene>
    <name type="ordered locus">At4g24160</name>
    <name type="ORF">T19F6.4</name>
</gene>
<comment type="function">
    <text evidence="3 4">Lysophosphatidic acid acyltransferase which functions in phosphatidic acid biosynthesis. Is highly specific for lysophosphatidic acid and able to use different acyl-CoA donors. May regulate neutral lipid accumulation and participate in the regulation of lipid turnover in vegetative cells. Possesses additional triacylglycerol lipase and phospholipase A2 activities in vitro. Is not active as esterase or lysophospholipase.</text>
</comment>
<comment type="catalytic activity">
    <reaction evidence="3">
        <text>a 1-acyl-sn-glycero-3-phosphate + an acyl-CoA = a 1,2-diacyl-sn-glycero-3-phosphate + CoA</text>
        <dbReference type="Rhea" id="RHEA:19709"/>
        <dbReference type="ChEBI" id="CHEBI:57287"/>
        <dbReference type="ChEBI" id="CHEBI:57970"/>
        <dbReference type="ChEBI" id="CHEBI:58342"/>
        <dbReference type="ChEBI" id="CHEBI:58608"/>
        <dbReference type="EC" id="2.3.1.51"/>
    </reaction>
</comment>
<comment type="subcellular location">
    <subcellularLocation>
        <location evidence="4">Cytoplasm</location>
    </subcellularLocation>
    <text>Does not associate with endogenous lipid droplets.</text>
</comment>
<comment type="alternative products">
    <event type="alternative splicing"/>
    <isoform>
        <id>O22975-1</id>
        <name>1</name>
        <sequence type="displayed"/>
    </isoform>
    <text>A number of isoforms are produced. According to EST sequences.</text>
</comment>
<comment type="domain">
    <text evidence="1">The HXXXXD motif is essential for acyltransferase activity and may constitute the binding site for the phosphate moiety of the glycerol-3-phosphate.</text>
</comment>
<comment type="disruption phenotype">
    <text evidence="4">Accumulation of neutral lipid droplets with marked increase in absolute triacylglycerol levels in leaf mesophyll cells.</text>
</comment>
<comment type="similarity">
    <text evidence="5">Belongs to the peptidase S33 family. ABHD4/ABHD5 subfamily.</text>
</comment>
<comment type="sequence caution" evidence="5">
    <conflict type="erroneous initiation">
        <sequence resource="EMBL-CDS" id="CAB51659"/>
    </conflict>
    <text>Truncated N-terminus.</text>
</comment>
<comment type="sequence caution" evidence="5">
    <conflict type="erroneous initiation">
        <sequence resource="EMBL-CDS" id="CAB79326"/>
    </conflict>
    <text>Truncated N-terminus.</text>
</comment>
<evidence type="ECO:0000250" key="1"/>
<evidence type="ECO:0000255" key="2"/>
<evidence type="ECO:0000269" key="3">
    <source>
    </source>
</evidence>
<evidence type="ECO:0000269" key="4">
    <source>
    </source>
</evidence>
<evidence type="ECO:0000305" key="5"/>
<reference key="1">
    <citation type="journal article" date="1999" name="Nature">
        <title>Sequence and analysis of chromosome 4 of the plant Arabidopsis thaliana.</title>
        <authorList>
            <person name="Mayer K.F.X."/>
            <person name="Schueller C."/>
            <person name="Wambutt R."/>
            <person name="Murphy G."/>
            <person name="Volckaert G."/>
            <person name="Pohl T."/>
            <person name="Duesterhoeft A."/>
            <person name="Stiekema W."/>
            <person name="Entian K.-D."/>
            <person name="Terryn N."/>
            <person name="Harris B."/>
            <person name="Ansorge W."/>
            <person name="Brandt P."/>
            <person name="Grivell L.A."/>
            <person name="Rieger M."/>
            <person name="Weichselgartner M."/>
            <person name="de Simone V."/>
            <person name="Obermaier B."/>
            <person name="Mache R."/>
            <person name="Mueller M."/>
            <person name="Kreis M."/>
            <person name="Delseny M."/>
            <person name="Puigdomenech P."/>
            <person name="Watson M."/>
            <person name="Schmidtheini T."/>
            <person name="Reichert B."/>
            <person name="Portetelle D."/>
            <person name="Perez-Alonso M."/>
            <person name="Boutry M."/>
            <person name="Bancroft I."/>
            <person name="Vos P."/>
            <person name="Hoheisel J."/>
            <person name="Zimmermann W."/>
            <person name="Wedler H."/>
            <person name="Ridley P."/>
            <person name="Langham S.-A."/>
            <person name="McCullagh B."/>
            <person name="Bilham L."/>
            <person name="Robben J."/>
            <person name="van der Schueren J."/>
            <person name="Grymonprez B."/>
            <person name="Chuang Y.-J."/>
            <person name="Vandenbussche F."/>
            <person name="Braeken M."/>
            <person name="Weltjens I."/>
            <person name="Voet M."/>
            <person name="Bastiaens I."/>
            <person name="Aert R."/>
            <person name="Defoor E."/>
            <person name="Weitzenegger T."/>
            <person name="Bothe G."/>
            <person name="Ramsperger U."/>
            <person name="Hilbert H."/>
            <person name="Braun M."/>
            <person name="Holzer E."/>
            <person name="Brandt A."/>
            <person name="Peters S."/>
            <person name="van Staveren M."/>
            <person name="Dirkse W."/>
            <person name="Mooijman P."/>
            <person name="Klein Lankhorst R."/>
            <person name="Rose M."/>
            <person name="Hauf J."/>
            <person name="Koetter P."/>
            <person name="Berneiser S."/>
            <person name="Hempel S."/>
            <person name="Feldpausch M."/>
            <person name="Lamberth S."/>
            <person name="Van den Daele H."/>
            <person name="De Keyser A."/>
            <person name="Buysshaert C."/>
            <person name="Gielen J."/>
            <person name="Villarroel R."/>
            <person name="De Clercq R."/>
            <person name="van Montagu M."/>
            <person name="Rogers J."/>
            <person name="Cronin A."/>
            <person name="Quail M.A."/>
            <person name="Bray-Allen S."/>
            <person name="Clark L."/>
            <person name="Doggett J."/>
            <person name="Hall S."/>
            <person name="Kay M."/>
            <person name="Lennard N."/>
            <person name="McLay K."/>
            <person name="Mayes R."/>
            <person name="Pettett A."/>
            <person name="Rajandream M.A."/>
            <person name="Lyne M."/>
            <person name="Benes V."/>
            <person name="Rechmann S."/>
            <person name="Borkova D."/>
            <person name="Bloecker H."/>
            <person name="Scharfe M."/>
            <person name="Grimm M."/>
            <person name="Loehnert T.-H."/>
            <person name="Dose S."/>
            <person name="de Haan M."/>
            <person name="Maarse A.C."/>
            <person name="Schaefer M."/>
            <person name="Mueller-Auer S."/>
            <person name="Gabel C."/>
            <person name="Fuchs M."/>
            <person name="Fartmann B."/>
            <person name="Granderath K."/>
            <person name="Dauner D."/>
            <person name="Herzl A."/>
            <person name="Neumann S."/>
            <person name="Argiriou A."/>
            <person name="Vitale D."/>
            <person name="Liguori R."/>
            <person name="Piravandi E."/>
            <person name="Massenet O."/>
            <person name="Quigley F."/>
            <person name="Clabauld G."/>
            <person name="Muendlein A."/>
            <person name="Felber R."/>
            <person name="Schnabl S."/>
            <person name="Hiller R."/>
            <person name="Schmidt W."/>
            <person name="Lecharny A."/>
            <person name="Aubourg S."/>
            <person name="Chefdor F."/>
            <person name="Cooke R."/>
            <person name="Berger C."/>
            <person name="Monfort A."/>
            <person name="Casacuberta E."/>
            <person name="Gibbons T."/>
            <person name="Weber N."/>
            <person name="Vandenbol M."/>
            <person name="Bargues M."/>
            <person name="Terol J."/>
            <person name="Torres A."/>
            <person name="Perez-Perez A."/>
            <person name="Purnelle B."/>
            <person name="Bent E."/>
            <person name="Johnson S."/>
            <person name="Tacon D."/>
            <person name="Jesse T."/>
            <person name="Heijnen L."/>
            <person name="Schwarz S."/>
            <person name="Scholler P."/>
            <person name="Heber S."/>
            <person name="Francs P."/>
            <person name="Bielke C."/>
            <person name="Frishman D."/>
            <person name="Haase D."/>
            <person name="Lemcke K."/>
            <person name="Mewes H.-W."/>
            <person name="Stocker S."/>
            <person name="Zaccaria P."/>
            <person name="Bevan M."/>
            <person name="Wilson R.K."/>
            <person name="de la Bastide M."/>
            <person name="Habermann K."/>
            <person name="Parnell L."/>
            <person name="Dedhia N."/>
            <person name="Gnoj L."/>
            <person name="Schutz K."/>
            <person name="Huang E."/>
            <person name="Spiegel L."/>
            <person name="Sekhon M."/>
            <person name="Murray J."/>
            <person name="Sheet P."/>
            <person name="Cordes M."/>
            <person name="Abu-Threideh J."/>
            <person name="Stoneking T."/>
            <person name="Kalicki J."/>
            <person name="Graves T."/>
            <person name="Harmon G."/>
            <person name="Edwards J."/>
            <person name="Latreille P."/>
            <person name="Courtney L."/>
            <person name="Cloud J."/>
            <person name="Abbott A."/>
            <person name="Scott K."/>
            <person name="Johnson D."/>
            <person name="Minx P."/>
            <person name="Bentley D."/>
            <person name="Fulton B."/>
            <person name="Miller N."/>
            <person name="Greco T."/>
            <person name="Kemp K."/>
            <person name="Kramer J."/>
            <person name="Fulton L."/>
            <person name="Mardis E."/>
            <person name="Dante M."/>
            <person name="Pepin K."/>
            <person name="Hillier L.W."/>
            <person name="Nelson J."/>
            <person name="Spieth J."/>
            <person name="Ryan E."/>
            <person name="Andrews S."/>
            <person name="Geisel C."/>
            <person name="Layman D."/>
            <person name="Du H."/>
            <person name="Ali J."/>
            <person name="Berghoff A."/>
            <person name="Jones K."/>
            <person name="Drone K."/>
            <person name="Cotton M."/>
            <person name="Joshu C."/>
            <person name="Antonoiu B."/>
            <person name="Zidanic M."/>
            <person name="Strong C."/>
            <person name="Sun H."/>
            <person name="Lamar B."/>
            <person name="Yordan C."/>
            <person name="Ma P."/>
            <person name="Zhong J."/>
            <person name="Preston R."/>
            <person name="Vil D."/>
            <person name="Shekher M."/>
            <person name="Matero A."/>
            <person name="Shah R."/>
            <person name="Swaby I.K."/>
            <person name="O'Shaughnessy A."/>
            <person name="Rodriguez M."/>
            <person name="Hoffman J."/>
            <person name="Till S."/>
            <person name="Granat S."/>
            <person name="Shohdy N."/>
            <person name="Hasegawa A."/>
            <person name="Hameed A."/>
            <person name="Lodhi M."/>
            <person name="Johnson A."/>
            <person name="Chen E."/>
            <person name="Marra M.A."/>
            <person name="Martienssen R."/>
            <person name="McCombie W.R."/>
        </authorList>
    </citation>
    <scope>NUCLEOTIDE SEQUENCE [LARGE SCALE GENOMIC DNA]</scope>
    <source>
        <strain>cv. Columbia</strain>
    </source>
</reference>
<reference key="2">
    <citation type="journal article" date="2017" name="Plant J.">
        <title>Araport11: a complete reannotation of the Arabidopsis thaliana reference genome.</title>
        <authorList>
            <person name="Cheng C.Y."/>
            <person name="Krishnakumar V."/>
            <person name="Chan A.P."/>
            <person name="Thibaud-Nissen F."/>
            <person name="Schobel S."/>
            <person name="Town C.D."/>
        </authorList>
    </citation>
    <scope>GENOME REANNOTATION</scope>
    <source>
        <strain>cv. Columbia</strain>
    </source>
</reference>
<reference key="3">
    <citation type="journal article" date="2002" name="Science">
        <title>Functional annotation of a full-length Arabidopsis cDNA collection.</title>
        <authorList>
            <person name="Seki M."/>
            <person name="Narusaka M."/>
            <person name="Kamiya A."/>
            <person name="Ishida J."/>
            <person name="Satou M."/>
            <person name="Sakurai T."/>
            <person name="Nakajima M."/>
            <person name="Enju A."/>
            <person name="Akiyama K."/>
            <person name="Oono Y."/>
            <person name="Muramatsu M."/>
            <person name="Hayashizaki Y."/>
            <person name="Kawai J."/>
            <person name="Carninci P."/>
            <person name="Itoh M."/>
            <person name="Ishii Y."/>
            <person name="Arakawa T."/>
            <person name="Shibata K."/>
            <person name="Shinagawa A."/>
            <person name="Shinozaki K."/>
        </authorList>
    </citation>
    <scope>NUCLEOTIDE SEQUENCE [LARGE SCALE MRNA]</scope>
    <source>
        <strain>cv. Columbia</strain>
    </source>
</reference>
<reference key="4">
    <citation type="submission" date="2006-12" db="EMBL/GenBank/DDBJ databases">
        <title>Arabidopsis ORF clones.</title>
        <authorList>
            <person name="Bautista V.R."/>
            <person name="Kim C.J."/>
            <person name="Chen H."/>
            <person name="Wu S.Y."/>
            <person name="De Los Reyes C."/>
            <person name="Ecker J.R."/>
        </authorList>
    </citation>
    <scope>NUCLEOTIDE SEQUENCE [LARGE SCALE MRNA]</scope>
    <source>
        <strain>cv. Columbia</strain>
    </source>
</reference>
<reference key="5">
    <citation type="journal article" date="2009" name="Plant Physiol.">
        <title>At4g24160, a soluble acyl-coenzyme A-dependent lysophosphatidic acid acyltransferase.</title>
        <authorList>
            <person name="Ghosh A.K."/>
            <person name="Chauhan N."/>
            <person name="Rajakumari S."/>
            <person name="Daum G."/>
            <person name="Rajasekharan R."/>
        </authorList>
    </citation>
    <scope>FUNCTION</scope>
    <scope>CATALYTIC ACTIVITY</scope>
</reference>
<reference key="6">
    <citation type="journal article" date="2010" name="Proc. Natl. Acad. Sci. U.S.A.">
        <title>Disruption of the Arabidopsis CGI-58 homologue produces Chanarin-Dorfman-like lipid droplet accumulation in plants.</title>
        <authorList>
            <person name="James C.N."/>
            <person name="Horn P.J."/>
            <person name="Case C.R."/>
            <person name="Gidda S.K."/>
            <person name="Zhang D."/>
            <person name="Mullen R.T."/>
            <person name="Dyer J.M."/>
            <person name="Anderson R.G."/>
            <person name="Chapman K.D."/>
        </authorList>
    </citation>
    <scope>FUNCTION</scope>
    <scope>SUBCELLULAR LOCATION</scope>
    <scope>DISRUPTION PHENOTYPE</scope>
</reference>
<proteinExistence type="evidence at protein level"/>
<feature type="chain" id="PRO_0000430169" description="1-acylglycerol-3-phosphate O-acyltransferase">
    <location>
        <begin position="1"/>
        <end position="418"/>
    </location>
</feature>
<feature type="domain" description="AB hydrolase-1" evidence="2">
    <location>
        <begin position="121"/>
        <end position="251"/>
    </location>
</feature>
<feature type="short sequence motif" description="GXSXG">
    <location>
        <begin position="197"/>
        <end position="201"/>
    </location>
</feature>
<feature type="short sequence motif" description="HXXXXD motif">
    <location>
        <begin position="379"/>
        <end position="384"/>
    </location>
</feature>
<accession>O22975</accession>
<accession>Q9SU43</accession>
<sequence length="418" mass="46526">MNLSRFASRLRMAEEISKTKVGSSSTASVADSSAAASAATNAAKSRWKILWPNSLRWIPTSTDYIIAAEKRLLSILKTPYVQEQVSIGSGPPGSKIRWFRSTSNESRYINTVTFDAKEGAPTLVMVHGYGASQGFFFRNFDALASRFRVIAIDQLGWGGSSRPDFTCRSTEETEAWFIDSFEEWRKAQNLSNFILLGHSFGGYVAAKYALKHPEHVQHLILVGSAGFSAEADAKSEWLTKFRATWKGAVLNHLWESNFTPQKLVRGLGPWGPGLVNRYTTARFGAHSEGTGLTEEEAKLLTDYVYHTLAAKASGELCLKYIFSFGAFARKPLLQSASEWKVPTTFIYGMNDWMNYQGAVEARKSMKVPCEIIRVPQGGHFVFIDNPIGFHSAVLYACRKFISQDSSHDQQLLDGLRLV</sequence>